<dbReference type="EMBL" id="AB015468">
    <property type="status" value="NOT_ANNOTATED_CDS"/>
    <property type="molecule type" value="Genomic_DNA"/>
</dbReference>
<dbReference type="EMBL" id="CP002688">
    <property type="protein sequence ID" value="AED95693.1"/>
    <property type="molecule type" value="Genomic_DNA"/>
</dbReference>
<dbReference type="RefSeq" id="NP_001032035.1">
    <property type="nucleotide sequence ID" value="NM_001036958.1"/>
</dbReference>
<dbReference type="SMR" id="Q2V305"/>
<dbReference type="STRING" id="3702.Q2V305"/>
<dbReference type="iPTMnet" id="Q2V305"/>
<dbReference type="PaxDb" id="3702-AT5G48595.1"/>
<dbReference type="ProteomicsDB" id="224231"/>
<dbReference type="EnsemblPlants" id="AT5G48595.1">
    <property type="protein sequence ID" value="AT5G48595.1"/>
    <property type="gene ID" value="AT5G48595"/>
</dbReference>
<dbReference type="GeneID" id="3771465"/>
<dbReference type="Gramene" id="AT5G48595.1">
    <property type="protein sequence ID" value="AT5G48595.1"/>
    <property type="gene ID" value="AT5G48595"/>
</dbReference>
<dbReference type="KEGG" id="ath:AT5G48595"/>
<dbReference type="Araport" id="AT5G48595"/>
<dbReference type="TAIR" id="AT5G48595"/>
<dbReference type="HOGENOM" id="CLU_180309_0_0_1"/>
<dbReference type="InParanoid" id="Q2V305"/>
<dbReference type="OMA" id="NIAHCEN"/>
<dbReference type="PhylomeDB" id="Q2V305"/>
<dbReference type="PRO" id="PR:Q2V305"/>
<dbReference type="Proteomes" id="UP000006548">
    <property type="component" value="Chromosome 5"/>
</dbReference>
<dbReference type="ExpressionAtlas" id="Q2V305">
    <property type="expression patterns" value="baseline"/>
</dbReference>
<dbReference type="GO" id="GO:0005576">
    <property type="term" value="C:extracellular region"/>
    <property type="evidence" value="ECO:0007669"/>
    <property type="project" value="UniProtKB-SubCell"/>
</dbReference>
<dbReference type="GO" id="GO:0050832">
    <property type="term" value="P:defense response to fungus"/>
    <property type="evidence" value="ECO:0007669"/>
    <property type="project" value="UniProtKB-KW"/>
</dbReference>
<dbReference type="GO" id="GO:0031640">
    <property type="term" value="P:killing of cells of another organism"/>
    <property type="evidence" value="ECO:0007669"/>
    <property type="project" value="UniProtKB-KW"/>
</dbReference>
<comment type="subcellular location">
    <subcellularLocation>
        <location evidence="1">Secreted</location>
    </subcellularLocation>
</comment>
<comment type="similarity">
    <text evidence="3">Belongs to the DEFL family.</text>
</comment>
<comment type="caution">
    <text evidence="3">Lacks 1 of the 4 disulfide bonds, which are conserved features of the family.</text>
</comment>
<proteinExistence type="evidence at transcript level"/>
<feature type="signal peptide" evidence="2">
    <location>
        <begin position="1"/>
        <end position="16"/>
    </location>
</feature>
<feature type="chain" id="PRO_0000379711" description="Defensin-like protein 219">
    <location>
        <begin position="17"/>
        <end position="98"/>
    </location>
</feature>
<feature type="disulfide bond" evidence="1">
    <location>
        <begin position="68"/>
        <end position="85"/>
    </location>
</feature>
<feature type="disulfide bond" evidence="1">
    <location>
        <begin position="71"/>
        <end position="90"/>
    </location>
</feature>
<feature type="disulfide bond" evidence="1">
    <location>
        <begin position="75"/>
        <end position="92"/>
    </location>
</feature>
<evidence type="ECO:0000250" key="1"/>
<evidence type="ECO:0000255" key="2"/>
<evidence type="ECO:0000305" key="3"/>
<name>DF219_ARATH</name>
<gene>
    <name type="ordered locus">At5g48595</name>
    <name type="ORF">K15N18</name>
</gene>
<reference key="1">
    <citation type="journal article" date="1998" name="DNA Res.">
        <title>Structural analysis of Arabidopsis thaliana chromosome 5. VII. Sequence features of the regions of 1,013,767 bp covered by sixteen physically assigned P1 and TAC clones.</title>
        <authorList>
            <person name="Nakamura Y."/>
            <person name="Sato S."/>
            <person name="Asamizu E."/>
            <person name="Kaneko T."/>
            <person name="Kotani H."/>
            <person name="Miyajima N."/>
            <person name="Tabata S."/>
        </authorList>
    </citation>
    <scope>NUCLEOTIDE SEQUENCE [LARGE SCALE GENOMIC DNA]</scope>
    <source>
        <strain>cv. Columbia</strain>
    </source>
</reference>
<reference key="2">
    <citation type="journal article" date="2017" name="Plant J.">
        <title>Araport11: a complete reannotation of the Arabidopsis thaliana reference genome.</title>
        <authorList>
            <person name="Cheng C.Y."/>
            <person name="Krishnakumar V."/>
            <person name="Chan A.P."/>
            <person name="Thibaud-Nissen F."/>
            <person name="Schobel S."/>
            <person name="Town C.D."/>
        </authorList>
    </citation>
    <scope>GENOME REANNOTATION</scope>
    <source>
        <strain>cv. Columbia</strain>
    </source>
</reference>
<reference key="3">
    <citation type="journal article" date="2005" name="Plant Physiol.">
        <title>Genome organization of more than 300 defensin-like genes in Arabidopsis.</title>
        <authorList>
            <person name="Silverstein K.A.T."/>
            <person name="Graham M.A."/>
            <person name="Paape T.D."/>
            <person name="VandenBosch K.A."/>
        </authorList>
    </citation>
    <scope>GENE FAMILY</scope>
</reference>
<accession>Q2V305</accession>
<protein>
    <recommendedName>
        <fullName>Defensin-like protein 219</fullName>
    </recommendedName>
</protein>
<sequence length="98" mass="11019">MKTIFVFLTLAVLVSSFFKKLFLRASNIMIKSISEGKSQFSGPALSPNIDPADEHIGHSPEDMKIIFCQQCAFHCIEKKKNIAHCENSICRCTLEDIL</sequence>
<keyword id="KW-0929">Antimicrobial</keyword>
<keyword id="KW-1015">Disulfide bond</keyword>
<keyword id="KW-0295">Fungicide</keyword>
<keyword id="KW-0611">Plant defense</keyword>
<keyword id="KW-1185">Reference proteome</keyword>
<keyword id="KW-0964">Secreted</keyword>
<keyword id="KW-0732">Signal</keyword>
<organism>
    <name type="scientific">Arabidopsis thaliana</name>
    <name type="common">Mouse-ear cress</name>
    <dbReference type="NCBI Taxonomy" id="3702"/>
    <lineage>
        <taxon>Eukaryota</taxon>
        <taxon>Viridiplantae</taxon>
        <taxon>Streptophyta</taxon>
        <taxon>Embryophyta</taxon>
        <taxon>Tracheophyta</taxon>
        <taxon>Spermatophyta</taxon>
        <taxon>Magnoliopsida</taxon>
        <taxon>eudicotyledons</taxon>
        <taxon>Gunneridae</taxon>
        <taxon>Pentapetalae</taxon>
        <taxon>rosids</taxon>
        <taxon>malvids</taxon>
        <taxon>Brassicales</taxon>
        <taxon>Brassicaceae</taxon>
        <taxon>Camelineae</taxon>
        <taxon>Arabidopsis</taxon>
    </lineage>
</organism>